<evidence type="ECO:0000255" key="1">
    <source>
        <dbReference type="HAMAP-Rule" id="MF_00664"/>
    </source>
</evidence>
<organism>
    <name type="scientific">Cereibacter sphaeroides (strain ATCC 17025 / ATH 2.4.3)</name>
    <name type="common">Rhodobacter sphaeroides</name>
    <dbReference type="NCBI Taxonomy" id="349102"/>
    <lineage>
        <taxon>Bacteria</taxon>
        <taxon>Pseudomonadati</taxon>
        <taxon>Pseudomonadota</taxon>
        <taxon>Alphaproteobacteria</taxon>
        <taxon>Rhodobacterales</taxon>
        <taxon>Paracoccaceae</taxon>
        <taxon>Cereibacter</taxon>
    </lineage>
</organism>
<comment type="function">
    <text evidence="1">Catalyzes the formation of phosphatidylethanolamine (PtdEtn) from phosphatidylserine (PtdSer).</text>
</comment>
<comment type="catalytic activity">
    <reaction evidence="1">
        <text>a 1,2-diacyl-sn-glycero-3-phospho-L-serine + H(+) = a 1,2-diacyl-sn-glycero-3-phosphoethanolamine + CO2</text>
        <dbReference type="Rhea" id="RHEA:20828"/>
        <dbReference type="ChEBI" id="CHEBI:15378"/>
        <dbReference type="ChEBI" id="CHEBI:16526"/>
        <dbReference type="ChEBI" id="CHEBI:57262"/>
        <dbReference type="ChEBI" id="CHEBI:64612"/>
        <dbReference type="EC" id="4.1.1.65"/>
    </reaction>
</comment>
<comment type="cofactor">
    <cofactor evidence="1">
        <name>pyruvate</name>
        <dbReference type="ChEBI" id="CHEBI:15361"/>
    </cofactor>
    <text evidence="1">Binds 1 pyruvoyl group covalently per subunit.</text>
</comment>
<comment type="pathway">
    <text evidence="1">Phospholipid metabolism; phosphatidylethanolamine biosynthesis; phosphatidylethanolamine from CDP-diacylglycerol: step 2/2.</text>
</comment>
<comment type="subunit">
    <text evidence="1">Heterodimer of a large membrane-associated beta subunit and a small pyruvoyl-containing alpha subunit.</text>
</comment>
<comment type="subcellular location">
    <subcellularLocation>
        <location evidence="1">Cell membrane</location>
        <topology evidence="1">Peripheral membrane protein</topology>
    </subcellularLocation>
</comment>
<comment type="PTM">
    <text evidence="1">Is synthesized initially as an inactive proenzyme. Formation of the active enzyme involves a self-maturation process in which the active site pyruvoyl group is generated from an internal serine residue via an autocatalytic post-translational modification. Two non-identical subunits are generated from the proenzyme in this reaction, and the pyruvate is formed at the N-terminus of the alpha chain, which is derived from the carboxyl end of the proenzyme. The post-translation cleavage follows an unusual pathway, termed non-hydrolytic serinolysis, in which the side chain hydroxyl group of the serine supplies its oxygen atom to form the C-terminus of the beta chain, while the remainder of the serine residue undergoes an oxidative deamination to produce ammonia and the pyruvoyl prosthetic group on the alpha chain.</text>
</comment>
<comment type="similarity">
    <text evidence="1">Belongs to the phosphatidylserine decarboxylase family. PSD-A subfamily.</text>
</comment>
<name>PSD_CERS5</name>
<feature type="chain" id="PRO_1000026682" description="Phosphatidylserine decarboxylase beta chain" evidence="1">
    <location>
        <begin position="1"/>
        <end position="189"/>
    </location>
</feature>
<feature type="chain" id="PRO_1000026683" description="Phosphatidylserine decarboxylase alpha chain" evidence="1">
    <location>
        <begin position="190"/>
        <end position="232"/>
    </location>
</feature>
<feature type="active site" description="Schiff-base intermediate with substrate; via pyruvic acid" evidence="1">
    <location>
        <position position="190"/>
    </location>
</feature>
<feature type="site" description="Cleavage (non-hydrolytic); by autocatalysis" evidence="1">
    <location>
        <begin position="189"/>
        <end position="190"/>
    </location>
</feature>
<feature type="modified residue" description="Pyruvic acid (Ser); by autocatalysis" evidence="1">
    <location>
        <position position="190"/>
    </location>
</feature>
<sequence>MAIDMLSTFIKPMHREGKKFVAIFAGVTLLLFLIWEPLGWIGVLLTVWCYYFFRDPVRITPTREGLIVSPADGVVSLIEPAVPPAELGMGPEPMTRVSVFMSVFDCHVNRAPIGGTVTAVAYRPGKFLNASLDKASVDNERNALAIRLADGRQIAVVQIAGLVARRILCDVKEGTPLLTGERFGMIRFGSRLDVYLPEGVEPLVSIGQVMTSGETVLADLTSTEARRSGAAR</sequence>
<protein>
    <recommendedName>
        <fullName evidence="1">Phosphatidylserine decarboxylase proenzyme</fullName>
        <ecNumber evidence="1">4.1.1.65</ecNumber>
    </recommendedName>
    <component>
        <recommendedName>
            <fullName evidence="1">Phosphatidylserine decarboxylase alpha chain</fullName>
        </recommendedName>
    </component>
    <component>
        <recommendedName>
            <fullName evidence="1">Phosphatidylserine decarboxylase beta chain</fullName>
        </recommendedName>
    </component>
</protein>
<dbReference type="EC" id="4.1.1.65" evidence="1"/>
<dbReference type="EMBL" id="CP000661">
    <property type="protein sequence ID" value="ABP71326.1"/>
    <property type="molecule type" value="Genomic_DNA"/>
</dbReference>
<dbReference type="STRING" id="349102.Rsph17025_2438"/>
<dbReference type="KEGG" id="rsq:Rsph17025_2438"/>
<dbReference type="eggNOG" id="COG0688">
    <property type="taxonomic scope" value="Bacteria"/>
</dbReference>
<dbReference type="HOGENOM" id="CLU_072492_0_0_5"/>
<dbReference type="BioCyc" id="RSPH349102:G1G8M-2513-MONOMER"/>
<dbReference type="UniPathway" id="UPA00558">
    <property type="reaction ID" value="UER00616"/>
</dbReference>
<dbReference type="GO" id="GO:0005886">
    <property type="term" value="C:plasma membrane"/>
    <property type="evidence" value="ECO:0007669"/>
    <property type="project" value="UniProtKB-SubCell"/>
</dbReference>
<dbReference type="GO" id="GO:0004609">
    <property type="term" value="F:phosphatidylserine decarboxylase activity"/>
    <property type="evidence" value="ECO:0007669"/>
    <property type="project" value="UniProtKB-UniRule"/>
</dbReference>
<dbReference type="GO" id="GO:0006646">
    <property type="term" value="P:phosphatidylethanolamine biosynthetic process"/>
    <property type="evidence" value="ECO:0007669"/>
    <property type="project" value="UniProtKB-UniRule"/>
</dbReference>
<dbReference type="HAMAP" id="MF_00664">
    <property type="entry name" value="PS_decarb_PSD_A"/>
    <property type="match status" value="1"/>
</dbReference>
<dbReference type="InterPro" id="IPR003817">
    <property type="entry name" value="PS_Dcarbxylase"/>
</dbReference>
<dbReference type="InterPro" id="IPR033175">
    <property type="entry name" value="PSD-A"/>
</dbReference>
<dbReference type="NCBIfam" id="NF003677">
    <property type="entry name" value="PRK05305.1-1"/>
    <property type="match status" value="1"/>
</dbReference>
<dbReference type="NCBIfam" id="NF003678">
    <property type="entry name" value="PRK05305.1-2"/>
    <property type="match status" value="1"/>
</dbReference>
<dbReference type="NCBIfam" id="NF003679">
    <property type="entry name" value="PRK05305.1-3"/>
    <property type="match status" value="1"/>
</dbReference>
<dbReference type="NCBIfam" id="NF003685">
    <property type="entry name" value="PRK05305.2-5"/>
    <property type="match status" value="1"/>
</dbReference>
<dbReference type="PANTHER" id="PTHR35809">
    <property type="entry name" value="ARCHAETIDYLSERINE DECARBOXYLASE PROENZYME-RELATED"/>
    <property type="match status" value="1"/>
</dbReference>
<dbReference type="PANTHER" id="PTHR35809:SF1">
    <property type="entry name" value="ARCHAETIDYLSERINE DECARBOXYLASE PROENZYME-RELATED"/>
    <property type="match status" value="1"/>
</dbReference>
<dbReference type="Pfam" id="PF02666">
    <property type="entry name" value="PS_Dcarbxylase"/>
    <property type="match status" value="1"/>
</dbReference>
<reference key="1">
    <citation type="submission" date="2007-04" db="EMBL/GenBank/DDBJ databases">
        <title>Complete sequence of chromosome of Rhodobacter sphaeroides ATCC 17025.</title>
        <authorList>
            <consortium name="US DOE Joint Genome Institute"/>
            <person name="Copeland A."/>
            <person name="Lucas S."/>
            <person name="Lapidus A."/>
            <person name="Barry K."/>
            <person name="Detter J.C."/>
            <person name="Glavina del Rio T."/>
            <person name="Hammon N."/>
            <person name="Israni S."/>
            <person name="Dalin E."/>
            <person name="Tice H."/>
            <person name="Pitluck S."/>
            <person name="Chertkov O."/>
            <person name="Brettin T."/>
            <person name="Bruce D."/>
            <person name="Han C."/>
            <person name="Schmutz J."/>
            <person name="Larimer F."/>
            <person name="Land M."/>
            <person name="Hauser L."/>
            <person name="Kyrpides N."/>
            <person name="Kim E."/>
            <person name="Richardson P."/>
            <person name="Mackenzie C."/>
            <person name="Choudhary M."/>
            <person name="Donohue T.J."/>
            <person name="Kaplan S."/>
        </authorList>
    </citation>
    <scope>NUCLEOTIDE SEQUENCE [LARGE SCALE GENOMIC DNA]</scope>
    <source>
        <strain>ATCC 17025 / ATH 2.4.3</strain>
    </source>
</reference>
<accession>A4WVB2</accession>
<keyword id="KW-1003">Cell membrane</keyword>
<keyword id="KW-0210">Decarboxylase</keyword>
<keyword id="KW-0444">Lipid biosynthesis</keyword>
<keyword id="KW-0443">Lipid metabolism</keyword>
<keyword id="KW-0456">Lyase</keyword>
<keyword id="KW-0472">Membrane</keyword>
<keyword id="KW-0594">Phospholipid biosynthesis</keyword>
<keyword id="KW-1208">Phospholipid metabolism</keyword>
<keyword id="KW-0670">Pyruvate</keyword>
<keyword id="KW-0865">Zymogen</keyword>
<gene>
    <name evidence="1" type="primary">psd</name>
    <name type="ordered locus">Rsph17025_2438</name>
</gene>
<proteinExistence type="inferred from homology"/>